<gene>
    <name evidence="2" type="primary">mutM</name>
    <name evidence="2" type="synonym">fpg</name>
    <name type="ordered locus">HCH_00567</name>
</gene>
<accession>Q2SPF3</accession>
<dbReference type="EC" id="3.2.2.23" evidence="2"/>
<dbReference type="EC" id="4.2.99.18" evidence="2"/>
<dbReference type="EMBL" id="CP000155">
    <property type="protein sequence ID" value="ABC27471.1"/>
    <property type="molecule type" value="Genomic_DNA"/>
</dbReference>
<dbReference type="RefSeq" id="WP_011394548.1">
    <property type="nucleotide sequence ID" value="NC_007645.1"/>
</dbReference>
<dbReference type="SMR" id="Q2SPF3"/>
<dbReference type="STRING" id="349521.HCH_00567"/>
<dbReference type="KEGG" id="hch:HCH_00567"/>
<dbReference type="eggNOG" id="COG0266">
    <property type="taxonomic scope" value="Bacteria"/>
</dbReference>
<dbReference type="HOGENOM" id="CLU_038423_1_1_6"/>
<dbReference type="OrthoDB" id="9800855at2"/>
<dbReference type="Proteomes" id="UP000000238">
    <property type="component" value="Chromosome"/>
</dbReference>
<dbReference type="GO" id="GO:0034039">
    <property type="term" value="F:8-oxo-7,8-dihydroguanine DNA N-glycosylase activity"/>
    <property type="evidence" value="ECO:0007669"/>
    <property type="project" value="TreeGrafter"/>
</dbReference>
<dbReference type="GO" id="GO:0140078">
    <property type="term" value="F:class I DNA-(apurinic or apyrimidinic site) endonuclease activity"/>
    <property type="evidence" value="ECO:0007669"/>
    <property type="project" value="UniProtKB-EC"/>
</dbReference>
<dbReference type="GO" id="GO:0003684">
    <property type="term" value="F:damaged DNA binding"/>
    <property type="evidence" value="ECO:0007669"/>
    <property type="project" value="InterPro"/>
</dbReference>
<dbReference type="GO" id="GO:0008270">
    <property type="term" value="F:zinc ion binding"/>
    <property type="evidence" value="ECO:0007669"/>
    <property type="project" value="UniProtKB-UniRule"/>
</dbReference>
<dbReference type="GO" id="GO:0006284">
    <property type="term" value="P:base-excision repair"/>
    <property type="evidence" value="ECO:0007669"/>
    <property type="project" value="InterPro"/>
</dbReference>
<dbReference type="CDD" id="cd08966">
    <property type="entry name" value="EcFpg-like_N"/>
    <property type="match status" value="1"/>
</dbReference>
<dbReference type="FunFam" id="1.10.8.50:FF:000003">
    <property type="entry name" value="Formamidopyrimidine-DNA glycosylase"/>
    <property type="match status" value="1"/>
</dbReference>
<dbReference type="FunFam" id="3.20.190.10:FF:000001">
    <property type="entry name" value="Formamidopyrimidine-DNA glycosylase"/>
    <property type="match status" value="1"/>
</dbReference>
<dbReference type="Gene3D" id="1.10.8.50">
    <property type="match status" value="1"/>
</dbReference>
<dbReference type="Gene3D" id="3.20.190.10">
    <property type="entry name" value="MutM-like, N-terminal"/>
    <property type="match status" value="1"/>
</dbReference>
<dbReference type="HAMAP" id="MF_00103">
    <property type="entry name" value="Fapy_DNA_glycosyl"/>
    <property type="match status" value="1"/>
</dbReference>
<dbReference type="InterPro" id="IPR015886">
    <property type="entry name" value="DNA_glyclase/AP_lyase_DNA-bd"/>
</dbReference>
<dbReference type="InterPro" id="IPR020629">
    <property type="entry name" value="Formamido-pyr_DNA_Glyclase"/>
</dbReference>
<dbReference type="InterPro" id="IPR012319">
    <property type="entry name" value="FPG_cat"/>
</dbReference>
<dbReference type="InterPro" id="IPR035937">
    <property type="entry name" value="MutM-like_N-ter"/>
</dbReference>
<dbReference type="InterPro" id="IPR010979">
    <property type="entry name" value="Ribosomal_uS13-like_H2TH"/>
</dbReference>
<dbReference type="InterPro" id="IPR000214">
    <property type="entry name" value="Znf_DNA_glyclase/AP_lyase"/>
</dbReference>
<dbReference type="InterPro" id="IPR010663">
    <property type="entry name" value="Znf_FPG/IleRS"/>
</dbReference>
<dbReference type="NCBIfam" id="TIGR00577">
    <property type="entry name" value="fpg"/>
    <property type="match status" value="1"/>
</dbReference>
<dbReference type="NCBIfam" id="NF002211">
    <property type="entry name" value="PRK01103.1"/>
    <property type="match status" value="1"/>
</dbReference>
<dbReference type="PANTHER" id="PTHR22993">
    <property type="entry name" value="FORMAMIDOPYRIMIDINE-DNA GLYCOSYLASE"/>
    <property type="match status" value="1"/>
</dbReference>
<dbReference type="PANTHER" id="PTHR22993:SF9">
    <property type="entry name" value="FORMAMIDOPYRIMIDINE-DNA GLYCOSYLASE"/>
    <property type="match status" value="1"/>
</dbReference>
<dbReference type="Pfam" id="PF01149">
    <property type="entry name" value="Fapy_DNA_glyco"/>
    <property type="match status" value="1"/>
</dbReference>
<dbReference type="Pfam" id="PF06831">
    <property type="entry name" value="H2TH"/>
    <property type="match status" value="1"/>
</dbReference>
<dbReference type="Pfam" id="PF06827">
    <property type="entry name" value="zf-FPG_IleRS"/>
    <property type="match status" value="1"/>
</dbReference>
<dbReference type="SMART" id="SM00898">
    <property type="entry name" value="Fapy_DNA_glyco"/>
    <property type="match status" value="1"/>
</dbReference>
<dbReference type="SMART" id="SM01232">
    <property type="entry name" value="H2TH"/>
    <property type="match status" value="1"/>
</dbReference>
<dbReference type="SUPFAM" id="SSF57716">
    <property type="entry name" value="Glucocorticoid receptor-like (DNA-binding domain)"/>
    <property type="match status" value="1"/>
</dbReference>
<dbReference type="SUPFAM" id="SSF81624">
    <property type="entry name" value="N-terminal domain of MutM-like DNA repair proteins"/>
    <property type="match status" value="1"/>
</dbReference>
<dbReference type="SUPFAM" id="SSF46946">
    <property type="entry name" value="S13-like H2TH domain"/>
    <property type="match status" value="1"/>
</dbReference>
<dbReference type="PROSITE" id="PS51068">
    <property type="entry name" value="FPG_CAT"/>
    <property type="match status" value="1"/>
</dbReference>
<dbReference type="PROSITE" id="PS51066">
    <property type="entry name" value="ZF_FPG_2"/>
    <property type="match status" value="1"/>
</dbReference>
<protein>
    <recommendedName>
        <fullName evidence="2">Formamidopyrimidine-DNA glycosylase</fullName>
        <shortName evidence="2">Fapy-DNA glycosylase</shortName>
        <ecNumber evidence="2">3.2.2.23</ecNumber>
    </recommendedName>
    <alternativeName>
        <fullName evidence="2">DNA-(apurinic or apyrimidinic site) lyase MutM</fullName>
        <shortName evidence="2">AP lyase MutM</shortName>
        <ecNumber evidence="2">4.2.99.18</ecNumber>
    </alternativeName>
</protein>
<evidence type="ECO:0000250" key="1"/>
<evidence type="ECO:0000255" key="2">
    <source>
        <dbReference type="HAMAP-Rule" id="MF_00103"/>
    </source>
</evidence>
<reference key="1">
    <citation type="journal article" date="2005" name="Nucleic Acids Res.">
        <title>Genomic blueprint of Hahella chejuensis, a marine microbe producing an algicidal agent.</title>
        <authorList>
            <person name="Jeong H."/>
            <person name="Yim J.H."/>
            <person name="Lee C."/>
            <person name="Choi S.-H."/>
            <person name="Park Y.K."/>
            <person name="Yoon S.H."/>
            <person name="Hur C.-G."/>
            <person name="Kang H.-Y."/>
            <person name="Kim D."/>
            <person name="Lee H.H."/>
            <person name="Park K.H."/>
            <person name="Park S.-H."/>
            <person name="Park H.-S."/>
            <person name="Lee H.K."/>
            <person name="Oh T.K."/>
            <person name="Kim J.F."/>
        </authorList>
    </citation>
    <scope>NUCLEOTIDE SEQUENCE [LARGE SCALE GENOMIC DNA]</scope>
    <source>
        <strain>KCTC 2396</strain>
    </source>
</reference>
<proteinExistence type="inferred from homology"/>
<name>FPG_HAHCH</name>
<feature type="initiator methionine" description="Removed" evidence="1">
    <location>
        <position position="1"/>
    </location>
</feature>
<feature type="chain" id="PRO_1000008702" description="Formamidopyrimidine-DNA glycosylase">
    <location>
        <begin position="2"/>
        <end position="271"/>
    </location>
</feature>
<feature type="zinc finger region" description="FPG-type" evidence="2">
    <location>
        <begin position="237"/>
        <end position="271"/>
    </location>
</feature>
<feature type="active site" description="Schiff-base intermediate with DNA" evidence="2">
    <location>
        <position position="2"/>
    </location>
</feature>
<feature type="active site" description="Proton donor" evidence="2">
    <location>
        <position position="3"/>
    </location>
</feature>
<feature type="active site" description="Proton donor; for beta-elimination activity" evidence="2">
    <location>
        <position position="58"/>
    </location>
</feature>
<feature type="active site" description="Proton donor; for delta-elimination activity" evidence="2">
    <location>
        <position position="261"/>
    </location>
</feature>
<feature type="binding site" evidence="2">
    <location>
        <position position="91"/>
    </location>
    <ligand>
        <name>DNA</name>
        <dbReference type="ChEBI" id="CHEBI:16991"/>
    </ligand>
</feature>
<feature type="binding site" evidence="2">
    <location>
        <position position="110"/>
    </location>
    <ligand>
        <name>DNA</name>
        <dbReference type="ChEBI" id="CHEBI:16991"/>
    </ligand>
</feature>
<feature type="binding site" evidence="2">
    <location>
        <position position="152"/>
    </location>
    <ligand>
        <name>DNA</name>
        <dbReference type="ChEBI" id="CHEBI:16991"/>
    </ligand>
</feature>
<keyword id="KW-0227">DNA damage</keyword>
<keyword id="KW-0234">DNA repair</keyword>
<keyword id="KW-0238">DNA-binding</keyword>
<keyword id="KW-0326">Glycosidase</keyword>
<keyword id="KW-0378">Hydrolase</keyword>
<keyword id="KW-0456">Lyase</keyword>
<keyword id="KW-0479">Metal-binding</keyword>
<keyword id="KW-0511">Multifunctional enzyme</keyword>
<keyword id="KW-1185">Reference proteome</keyword>
<keyword id="KW-0862">Zinc</keyword>
<keyword id="KW-0863">Zinc-finger</keyword>
<organism>
    <name type="scientific">Hahella chejuensis (strain KCTC 2396)</name>
    <dbReference type="NCBI Taxonomy" id="349521"/>
    <lineage>
        <taxon>Bacteria</taxon>
        <taxon>Pseudomonadati</taxon>
        <taxon>Pseudomonadota</taxon>
        <taxon>Gammaproteobacteria</taxon>
        <taxon>Oceanospirillales</taxon>
        <taxon>Hahellaceae</taxon>
        <taxon>Hahella</taxon>
    </lineage>
</organism>
<comment type="function">
    <text evidence="2">Involved in base excision repair of DNA damaged by oxidation or by mutagenic agents. Acts as a DNA glycosylase that recognizes and removes damaged bases. Has a preference for oxidized purines, such as 7,8-dihydro-8-oxoguanine (8-oxoG). Has AP (apurinic/apyrimidinic) lyase activity and introduces nicks in the DNA strand. Cleaves the DNA backbone by beta-delta elimination to generate a single-strand break at the site of the removed base with both 3'- and 5'-phosphates.</text>
</comment>
<comment type="catalytic activity">
    <reaction evidence="2">
        <text>Hydrolysis of DNA containing ring-opened 7-methylguanine residues, releasing 2,6-diamino-4-hydroxy-5-(N-methyl)formamidopyrimidine.</text>
        <dbReference type="EC" id="3.2.2.23"/>
    </reaction>
</comment>
<comment type="catalytic activity">
    <reaction evidence="2">
        <text>2'-deoxyribonucleotide-(2'-deoxyribose 5'-phosphate)-2'-deoxyribonucleotide-DNA = a 3'-end 2'-deoxyribonucleotide-(2,3-dehydro-2,3-deoxyribose 5'-phosphate)-DNA + a 5'-end 5'-phospho-2'-deoxyribonucleoside-DNA + H(+)</text>
        <dbReference type="Rhea" id="RHEA:66592"/>
        <dbReference type="Rhea" id="RHEA-COMP:13180"/>
        <dbReference type="Rhea" id="RHEA-COMP:16897"/>
        <dbReference type="Rhea" id="RHEA-COMP:17067"/>
        <dbReference type="ChEBI" id="CHEBI:15378"/>
        <dbReference type="ChEBI" id="CHEBI:136412"/>
        <dbReference type="ChEBI" id="CHEBI:157695"/>
        <dbReference type="ChEBI" id="CHEBI:167181"/>
        <dbReference type="EC" id="4.2.99.18"/>
    </reaction>
</comment>
<comment type="cofactor">
    <cofactor evidence="2">
        <name>Zn(2+)</name>
        <dbReference type="ChEBI" id="CHEBI:29105"/>
    </cofactor>
    <text evidence="2">Binds 1 zinc ion per subunit.</text>
</comment>
<comment type="subunit">
    <text evidence="2">Monomer.</text>
</comment>
<comment type="similarity">
    <text evidence="2">Belongs to the FPG family.</text>
</comment>
<sequence>MPELPEVETTRRGVAPHITGRKILQVNIYEPRLRWPVPMDLPAAAQGKTVLNVTRRAKYLLINLGDDELLFHLGMSGNLRIVAPETPRMKHDHVDILLEGDITLRYNDPRRFGCLLLLNPPTQEHPLLKHLGPEPLSDQFSGELLYKRSRQRKSPVKTFLMDQAIVVGVGNIYANEALFLAGIRPTRAAGEVSLKRYQVLAEAVRKVLSDAINMGGATLRDFVGGDGKPGYFQQTLRAYGRGGQPCTVCQTELKEIKLGQRTSVFCPSCQR</sequence>